<comment type="function">
    <text evidence="1">Binds the lower part of the 30S subunit head. Binds mRNA in the 70S ribosome, positioning it for translation.</text>
</comment>
<comment type="subunit">
    <text evidence="1">Part of the 30S ribosomal subunit. Forms a tight complex with proteins S10 and S14.</text>
</comment>
<comment type="similarity">
    <text evidence="1">Belongs to the universal ribosomal protein uS3 family.</text>
</comment>
<dbReference type="EMBL" id="CP001600">
    <property type="protein sequence ID" value="ACR70716.1"/>
    <property type="molecule type" value="Genomic_DNA"/>
</dbReference>
<dbReference type="RefSeq" id="WP_005290389.1">
    <property type="nucleotide sequence ID" value="NZ_CP169062.1"/>
</dbReference>
<dbReference type="SMR" id="C5BGL9"/>
<dbReference type="STRING" id="67780.B6E78_09540"/>
<dbReference type="GeneID" id="93122111"/>
<dbReference type="KEGG" id="eic:NT01EI_3588"/>
<dbReference type="HOGENOM" id="CLU_058591_0_2_6"/>
<dbReference type="OrthoDB" id="9806396at2"/>
<dbReference type="Proteomes" id="UP000001485">
    <property type="component" value="Chromosome"/>
</dbReference>
<dbReference type="GO" id="GO:0022627">
    <property type="term" value="C:cytosolic small ribosomal subunit"/>
    <property type="evidence" value="ECO:0007669"/>
    <property type="project" value="TreeGrafter"/>
</dbReference>
<dbReference type="GO" id="GO:0003729">
    <property type="term" value="F:mRNA binding"/>
    <property type="evidence" value="ECO:0007669"/>
    <property type="project" value="UniProtKB-UniRule"/>
</dbReference>
<dbReference type="GO" id="GO:0019843">
    <property type="term" value="F:rRNA binding"/>
    <property type="evidence" value="ECO:0007669"/>
    <property type="project" value="UniProtKB-UniRule"/>
</dbReference>
<dbReference type="GO" id="GO:0003735">
    <property type="term" value="F:structural constituent of ribosome"/>
    <property type="evidence" value="ECO:0007669"/>
    <property type="project" value="InterPro"/>
</dbReference>
<dbReference type="GO" id="GO:0006412">
    <property type="term" value="P:translation"/>
    <property type="evidence" value="ECO:0007669"/>
    <property type="project" value="UniProtKB-UniRule"/>
</dbReference>
<dbReference type="CDD" id="cd02412">
    <property type="entry name" value="KH-II_30S_S3"/>
    <property type="match status" value="1"/>
</dbReference>
<dbReference type="FunFam" id="3.30.1140.32:FF:000001">
    <property type="entry name" value="30S ribosomal protein S3"/>
    <property type="match status" value="1"/>
</dbReference>
<dbReference type="FunFam" id="3.30.300.20:FF:000001">
    <property type="entry name" value="30S ribosomal protein S3"/>
    <property type="match status" value="1"/>
</dbReference>
<dbReference type="Gene3D" id="3.30.300.20">
    <property type="match status" value="1"/>
</dbReference>
<dbReference type="Gene3D" id="3.30.1140.32">
    <property type="entry name" value="Ribosomal protein S3, C-terminal domain"/>
    <property type="match status" value="1"/>
</dbReference>
<dbReference type="HAMAP" id="MF_01309_B">
    <property type="entry name" value="Ribosomal_uS3_B"/>
    <property type="match status" value="1"/>
</dbReference>
<dbReference type="InterPro" id="IPR004087">
    <property type="entry name" value="KH_dom"/>
</dbReference>
<dbReference type="InterPro" id="IPR015946">
    <property type="entry name" value="KH_dom-like_a/b"/>
</dbReference>
<dbReference type="InterPro" id="IPR004044">
    <property type="entry name" value="KH_dom_type_2"/>
</dbReference>
<dbReference type="InterPro" id="IPR009019">
    <property type="entry name" value="KH_sf_prok-type"/>
</dbReference>
<dbReference type="InterPro" id="IPR036419">
    <property type="entry name" value="Ribosomal_S3_C_sf"/>
</dbReference>
<dbReference type="InterPro" id="IPR005704">
    <property type="entry name" value="Ribosomal_uS3_bac-typ"/>
</dbReference>
<dbReference type="InterPro" id="IPR001351">
    <property type="entry name" value="Ribosomal_uS3_C"/>
</dbReference>
<dbReference type="InterPro" id="IPR018280">
    <property type="entry name" value="Ribosomal_uS3_CS"/>
</dbReference>
<dbReference type="NCBIfam" id="TIGR01009">
    <property type="entry name" value="rpsC_bact"/>
    <property type="match status" value="1"/>
</dbReference>
<dbReference type="PANTHER" id="PTHR11760">
    <property type="entry name" value="30S/40S RIBOSOMAL PROTEIN S3"/>
    <property type="match status" value="1"/>
</dbReference>
<dbReference type="PANTHER" id="PTHR11760:SF19">
    <property type="entry name" value="SMALL RIBOSOMAL SUBUNIT PROTEIN US3C"/>
    <property type="match status" value="1"/>
</dbReference>
<dbReference type="Pfam" id="PF07650">
    <property type="entry name" value="KH_2"/>
    <property type="match status" value="1"/>
</dbReference>
<dbReference type="Pfam" id="PF00189">
    <property type="entry name" value="Ribosomal_S3_C"/>
    <property type="match status" value="1"/>
</dbReference>
<dbReference type="SMART" id="SM00322">
    <property type="entry name" value="KH"/>
    <property type="match status" value="1"/>
</dbReference>
<dbReference type="SUPFAM" id="SSF54814">
    <property type="entry name" value="Prokaryotic type KH domain (KH-domain type II)"/>
    <property type="match status" value="1"/>
</dbReference>
<dbReference type="SUPFAM" id="SSF54821">
    <property type="entry name" value="Ribosomal protein S3 C-terminal domain"/>
    <property type="match status" value="1"/>
</dbReference>
<dbReference type="PROSITE" id="PS50823">
    <property type="entry name" value="KH_TYPE_2"/>
    <property type="match status" value="1"/>
</dbReference>
<dbReference type="PROSITE" id="PS00548">
    <property type="entry name" value="RIBOSOMAL_S3"/>
    <property type="match status" value="1"/>
</dbReference>
<gene>
    <name evidence="1" type="primary">rpsC</name>
    <name type="ordered locus">NT01EI_3588</name>
</gene>
<feature type="chain" id="PRO_1000214337" description="Small ribosomal subunit protein uS3">
    <location>
        <begin position="1"/>
        <end position="233"/>
    </location>
</feature>
<feature type="domain" description="KH type-2" evidence="1">
    <location>
        <begin position="39"/>
        <end position="107"/>
    </location>
</feature>
<name>RS3_EDWI9</name>
<reference key="1">
    <citation type="submission" date="2009-03" db="EMBL/GenBank/DDBJ databases">
        <title>Complete genome sequence of Edwardsiella ictaluri 93-146.</title>
        <authorList>
            <person name="Williams M.L."/>
            <person name="Gillaspy A.F."/>
            <person name="Dyer D.W."/>
            <person name="Thune R.L."/>
            <person name="Waldbieser G.C."/>
            <person name="Schuster S.C."/>
            <person name="Gipson J."/>
            <person name="Zaitshik J."/>
            <person name="Landry C."/>
            <person name="Lawrence M.L."/>
        </authorList>
    </citation>
    <scope>NUCLEOTIDE SEQUENCE [LARGE SCALE GENOMIC DNA]</scope>
    <source>
        <strain>93-146</strain>
    </source>
</reference>
<accession>C5BGL9</accession>
<evidence type="ECO:0000255" key="1">
    <source>
        <dbReference type="HAMAP-Rule" id="MF_01309"/>
    </source>
</evidence>
<evidence type="ECO:0000305" key="2"/>
<keyword id="KW-0687">Ribonucleoprotein</keyword>
<keyword id="KW-0689">Ribosomal protein</keyword>
<keyword id="KW-0694">RNA-binding</keyword>
<keyword id="KW-0699">rRNA-binding</keyword>
<proteinExistence type="inferred from homology"/>
<organism>
    <name type="scientific">Edwardsiella ictaluri (strain 93-146)</name>
    <dbReference type="NCBI Taxonomy" id="634503"/>
    <lineage>
        <taxon>Bacteria</taxon>
        <taxon>Pseudomonadati</taxon>
        <taxon>Pseudomonadota</taxon>
        <taxon>Gammaproteobacteria</taxon>
        <taxon>Enterobacterales</taxon>
        <taxon>Hafniaceae</taxon>
        <taxon>Edwardsiella</taxon>
    </lineage>
</organism>
<sequence length="233" mass="26026">MGQKVHPNGIRLGIVKPWNSTWYANTKEFADNLDSDFKVRQFLNKELEKASVSRIVIERPAKSIRVTIHTARPGIVIGKKGEDVEKLRKGVAEIAGVPAQINIAEVRKPELDAKLVADSITSQLERRVMFRRAMKRAVQNAMRLGAKGIKVEVSGRLGGAEIARTEWYREGRVPLHTLRADIDYNTSEAHTTYGVIGVKVWIFKGEILGGMAAVEQPEKPAAQPKKQQRKGRK</sequence>
<protein>
    <recommendedName>
        <fullName evidence="1">Small ribosomal subunit protein uS3</fullName>
    </recommendedName>
    <alternativeName>
        <fullName evidence="2">30S ribosomal protein S3</fullName>
    </alternativeName>
</protein>